<name>TFB5_CANAL</name>
<protein>
    <recommendedName>
        <fullName>General transcription and DNA repair factor IIH subunit TFB5</fullName>
        <shortName>TFIIH subunit TFB5</shortName>
    </recommendedName>
    <alternativeName>
        <fullName>RNA polymerase II transcription factor B subunit 5</fullName>
    </alternativeName>
</protein>
<reference key="1">
    <citation type="journal article" date="2004" name="Proc. Natl. Acad. Sci. U.S.A.">
        <title>The diploid genome sequence of Candida albicans.</title>
        <authorList>
            <person name="Jones T."/>
            <person name="Federspiel N.A."/>
            <person name="Chibana H."/>
            <person name="Dungan J."/>
            <person name="Kalman S."/>
            <person name="Magee B.B."/>
            <person name="Newport G."/>
            <person name="Thorstenson Y.R."/>
            <person name="Agabian N."/>
            <person name="Magee P.T."/>
            <person name="Davis R.W."/>
            <person name="Scherer S."/>
        </authorList>
    </citation>
    <scope>NUCLEOTIDE SEQUENCE [LARGE SCALE GENOMIC DNA]</scope>
    <source>
        <strain>SC5314 / ATCC MYA-2876</strain>
    </source>
</reference>
<reference key="2">
    <citation type="journal article" date="2007" name="Genome Biol.">
        <title>Assembly of the Candida albicans genome into sixteen supercontigs aligned on the eight chromosomes.</title>
        <authorList>
            <person name="van het Hoog M."/>
            <person name="Rast T.J."/>
            <person name="Martchenko M."/>
            <person name="Grindle S."/>
            <person name="Dignard D."/>
            <person name="Hogues H."/>
            <person name="Cuomo C."/>
            <person name="Berriman M."/>
            <person name="Scherer S."/>
            <person name="Magee B.B."/>
            <person name="Whiteway M."/>
            <person name="Chibana H."/>
            <person name="Nantel A."/>
            <person name="Magee P.T."/>
        </authorList>
    </citation>
    <scope>GENOME REANNOTATION</scope>
    <source>
        <strain>SC5314 / ATCC MYA-2876</strain>
    </source>
</reference>
<reference key="3">
    <citation type="journal article" date="2013" name="Genome Biol.">
        <title>Assembly of a phased diploid Candida albicans genome facilitates allele-specific measurements and provides a simple model for repeat and indel structure.</title>
        <authorList>
            <person name="Muzzey D."/>
            <person name="Schwartz K."/>
            <person name="Weissman J.S."/>
            <person name="Sherlock G."/>
        </authorList>
    </citation>
    <scope>NUCLEOTIDE SEQUENCE [LARGE SCALE GENOMIC DNA]</scope>
    <scope>GENOME REANNOTATION</scope>
    <source>
        <strain>SC5314 / ATCC MYA-2876</strain>
    </source>
</reference>
<keyword id="KW-0227">DNA damage</keyword>
<keyword id="KW-0234">DNA repair</keyword>
<keyword id="KW-0539">Nucleus</keyword>
<keyword id="KW-1185">Reference proteome</keyword>
<keyword id="KW-0804">Transcription</keyword>
<keyword id="KW-0805">Transcription regulation</keyword>
<feature type="chain" id="PRO_0000119278" description="General transcription and DNA repair factor IIH subunit TFB5">
    <location>
        <begin position="1"/>
        <end position="69"/>
    </location>
</feature>
<sequence>MLVASKGVLVQCDPSIKALIIQIDSSSSGIILEELDETHLLIQHDKVNFVKSELNRLLSKNIYNPFEEE</sequence>
<comment type="function">
    <text evidence="2">Component of the general transcription and DNA repair factor IIH (TFIIH) core complex, which is involved in general and transcription-coupled nucleotide excision repair (NER) of damaged DNA and, when complexed to TFIIK, in RNA transcription by RNA polymerase II. In NER, TFIIH acts by opening DNA around the lesion to allow the excision of the damaged oligonucleotide and its replacement by a new DNA fragment. In transcription, TFIIH has an essential role in transcription initiation. When the pre-initiation complex (PIC) has been established, TFIIH is required for promoter opening and promoter escape. Phosphorylation of the C-terminal tail (CTD) of the largest subunit of RNA polymerase II by the kinase module TFIIK controls the initiation of transcription.</text>
</comment>
<comment type="subunit">
    <text evidence="2">Component of the 7-subunit TFIIH core complex composed of XPB/SSL2, XPD/RAD3, SSL1, TFB1, TFB2, TFB4 and TFB5, which is active in NER. The core complex associates with the 3-subunit CTD-kinase module TFIIK composed of CCL1, KIN28 and TFB3 to form the 10-subunit holoenzyme (holo-TFIIH) active in transcription.</text>
</comment>
<comment type="subcellular location">
    <subcellularLocation>
        <location evidence="1">Nucleus</location>
    </subcellularLocation>
</comment>
<comment type="similarity">
    <text evidence="3">Belongs to the TFB5 family.</text>
</comment>
<evidence type="ECO:0000250" key="1"/>
<evidence type="ECO:0000250" key="2">
    <source>
        <dbReference type="UniProtKB" id="Q3E7C1"/>
    </source>
</evidence>
<evidence type="ECO:0000305" key="3"/>
<proteinExistence type="inferred from homology"/>
<dbReference type="EMBL" id="CP017623">
    <property type="protein sequence ID" value="AOW26380.1"/>
    <property type="molecule type" value="Genomic_DNA"/>
</dbReference>
<dbReference type="RefSeq" id="XP_019330670.1">
    <property type="nucleotide sequence ID" value="XM_019475125.1"/>
</dbReference>
<dbReference type="SMR" id="P0C0X3"/>
<dbReference type="FunCoup" id="P0C0X3">
    <property type="interactions" value="165"/>
</dbReference>
<dbReference type="STRING" id="237561.P0C0X3"/>
<dbReference type="EnsemblFungi" id="C1_07280C_A-T">
    <property type="protein sequence ID" value="C1_07280C_A-T-p1"/>
    <property type="gene ID" value="C1_07280C_A"/>
</dbReference>
<dbReference type="GeneID" id="30515021"/>
<dbReference type="KEGG" id="cal:CAALFM_C107280CA"/>
<dbReference type="CGD" id="CAL0000181098">
    <property type="gene designation" value="orf19.4439.1"/>
</dbReference>
<dbReference type="VEuPathDB" id="FungiDB:C1_07280C_A"/>
<dbReference type="eggNOG" id="KOG3451">
    <property type="taxonomic scope" value="Eukaryota"/>
</dbReference>
<dbReference type="InParanoid" id="P0C0X3"/>
<dbReference type="OMA" id="IYNPMDE"/>
<dbReference type="OrthoDB" id="354at2759"/>
<dbReference type="Proteomes" id="UP000000559">
    <property type="component" value="Chromosome 1"/>
</dbReference>
<dbReference type="GO" id="GO:0005829">
    <property type="term" value="C:cytosol"/>
    <property type="evidence" value="ECO:0007669"/>
    <property type="project" value="EnsemblFungi"/>
</dbReference>
<dbReference type="GO" id="GO:0000439">
    <property type="term" value="C:transcription factor TFIIH core complex"/>
    <property type="evidence" value="ECO:0000318"/>
    <property type="project" value="GO_Central"/>
</dbReference>
<dbReference type="GO" id="GO:0005675">
    <property type="term" value="C:transcription factor TFIIH holo complex"/>
    <property type="evidence" value="ECO:0000318"/>
    <property type="project" value="GO_Central"/>
</dbReference>
<dbReference type="GO" id="GO:0006294">
    <property type="term" value="P:nucleotide-excision repair, preincision complex assembly"/>
    <property type="evidence" value="ECO:0000318"/>
    <property type="project" value="GO_Central"/>
</dbReference>
<dbReference type="GO" id="GO:0006366">
    <property type="term" value="P:transcription by RNA polymerase II"/>
    <property type="evidence" value="ECO:0000318"/>
    <property type="project" value="GO_Central"/>
</dbReference>
<dbReference type="GO" id="GO:0006367">
    <property type="term" value="P:transcription initiation at RNA polymerase II promoter"/>
    <property type="evidence" value="ECO:0007669"/>
    <property type="project" value="EnsemblFungi"/>
</dbReference>
<dbReference type="FunFam" id="3.30.70.1220:FF:000002">
    <property type="entry name" value="RNA polymerase II transcription factor B subunit 5"/>
    <property type="match status" value="1"/>
</dbReference>
<dbReference type="Gene3D" id="3.30.70.1220">
    <property type="entry name" value="TFB5-like"/>
    <property type="match status" value="1"/>
</dbReference>
<dbReference type="InterPro" id="IPR035935">
    <property type="entry name" value="TFB5-like_sf"/>
</dbReference>
<dbReference type="InterPro" id="IPR009400">
    <property type="entry name" value="TFIIH_TTDA/Tfb5"/>
</dbReference>
<dbReference type="PANTHER" id="PTHR28580">
    <property type="entry name" value="GENERAL TRANSCRIPTION FACTOR IIH SUBUNIT 5"/>
    <property type="match status" value="1"/>
</dbReference>
<dbReference type="PANTHER" id="PTHR28580:SF1">
    <property type="entry name" value="GENERAL TRANSCRIPTION FACTOR IIH SUBUNIT 5"/>
    <property type="match status" value="1"/>
</dbReference>
<dbReference type="Pfam" id="PF06331">
    <property type="entry name" value="Tfb5"/>
    <property type="match status" value="1"/>
</dbReference>
<dbReference type="SMART" id="SM01395">
    <property type="entry name" value="Tbf5"/>
    <property type="match status" value="1"/>
</dbReference>
<dbReference type="SUPFAM" id="SSF142897">
    <property type="entry name" value="TFB5-like"/>
    <property type="match status" value="1"/>
</dbReference>
<gene>
    <name type="primary">TFB5</name>
    <name type="ordered locus">CAALFM_C107280CA</name>
    <name type="ORF">CaO19.11919.1</name>
    <name type="ORF">CaO19.4439.1</name>
</gene>
<accession>P0C0X3</accession>
<accession>A0A1D8PE18</accession>
<organism>
    <name type="scientific">Candida albicans (strain SC5314 / ATCC MYA-2876)</name>
    <name type="common">Yeast</name>
    <dbReference type="NCBI Taxonomy" id="237561"/>
    <lineage>
        <taxon>Eukaryota</taxon>
        <taxon>Fungi</taxon>
        <taxon>Dikarya</taxon>
        <taxon>Ascomycota</taxon>
        <taxon>Saccharomycotina</taxon>
        <taxon>Pichiomycetes</taxon>
        <taxon>Debaryomycetaceae</taxon>
        <taxon>Candida/Lodderomyces clade</taxon>
        <taxon>Candida</taxon>
    </lineage>
</organism>